<evidence type="ECO:0000255" key="1">
    <source>
        <dbReference type="HAMAP-Rule" id="MF_00237"/>
    </source>
</evidence>
<evidence type="ECO:0000256" key="2">
    <source>
        <dbReference type="SAM" id="MobiDB-lite"/>
    </source>
</evidence>
<gene>
    <name evidence="1" type="primary">tatB</name>
    <name type="ordered locus">Tcr_1973</name>
</gene>
<sequence length="162" mass="18086">MFDIGFLEIIVIMVIALIVIGPERMPEVARKIGQFMGKTKRFINSMKENSEITETVRDLQNSMNLEEEKRNLESVSDTLHDDFSKIQDEFGIDQEISRPFDADEPTAFSGTQFNKAPTQPKMPTTEESPSSTPETSTKETEKTSTSDVSAPSESTPESSNKS</sequence>
<name>TATB_HYDCU</name>
<proteinExistence type="inferred from homology"/>
<organism>
    <name type="scientific">Hydrogenovibrio crunogenus (strain DSM 25203 / XCL-2)</name>
    <name type="common">Thiomicrospira crunogena</name>
    <dbReference type="NCBI Taxonomy" id="317025"/>
    <lineage>
        <taxon>Bacteria</taxon>
        <taxon>Pseudomonadati</taxon>
        <taxon>Pseudomonadota</taxon>
        <taxon>Gammaproteobacteria</taxon>
        <taxon>Thiotrichales</taxon>
        <taxon>Piscirickettsiaceae</taxon>
        <taxon>Hydrogenovibrio</taxon>
    </lineage>
</organism>
<protein>
    <recommendedName>
        <fullName evidence="1">Sec-independent protein translocase protein TatB</fullName>
    </recommendedName>
</protein>
<reference key="1">
    <citation type="journal article" date="2006" name="PLoS Biol.">
        <title>The genome of deep-sea vent chemolithoautotroph Thiomicrospira crunogena XCL-2.</title>
        <authorList>
            <person name="Scott K.M."/>
            <person name="Sievert S.M."/>
            <person name="Abril F.N."/>
            <person name="Ball L.A."/>
            <person name="Barrett C.J."/>
            <person name="Blake R.A."/>
            <person name="Boller A.J."/>
            <person name="Chain P.S.G."/>
            <person name="Clark J.A."/>
            <person name="Davis C.R."/>
            <person name="Detter C."/>
            <person name="Do K.F."/>
            <person name="Dobrinski K.P."/>
            <person name="Faza B.I."/>
            <person name="Fitzpatrick K.A."/>
            <person name="Freyermuth S.K."/>
            <person name="Harmer T.L."/>
            <person name="Hauser L.J."/>
            <person name="Huegler M."/>
            <person name="Kerfeld C.A."/>
            <person name="Klotz M.G."/>
            <person name="Kong W.W."/>
            <person name="Land M."/>
            <person name="Lapidus A."/>
            <person name="Larimer F.W."/>
            <person name="Longo D.L."/>
            <person name="Lucas S."/>
            <person name="Malfatti S.A."/>
            <person name="Massey S.E."/>
            <person name="Martin D.D."/>
            <person name="McCuddin Z."/>
            <person name="Meyer F."/>
            <person name="Moore J.L."/>
            <person name="Ocampo L.H. Jr."/>
            <person name="Paul J.H."/>
            <person name="Paulsen I.T."/>
            <person name="Reep D.K."/>
            <person name="Ren Q."/>
            <person name="Ross R.L."/>
            <person name="Sato P.Y."/>
            <person name="Thomas P."/>
            <person name="Tinkham L.E."/>
            <person name="Zeruth G.T."/>
        </authorList>
    </citation>
    <scope>NUCLEOTIDE SEQUENCE [LARGE SCALE GENOMIC DNA]</scope>
    <source>
        <strain>DSM 25203 / XCL-2</strain>
    </source>
</reference>
<feature type="chain" id="PRO_0000301246" description="Sec-independent protein translocase protein TatB">
    <location>
        <begin position="1"/>
        <end position="162"/>
    </location>
</feature>
<feature type="transmembrane region" description="Helical" evidence="1">
    <location>
        <begin position="1"/>
        <end position="21"/>
    </location>
</feature>
<feature type="region of interest" description="Disordered" evidence="2">
    <location>
        <begin position="86"/>
        <end position="162"/>
    </location>
</feature>
<feature type="compositionally biased region" description="Polar residues" evidence="2">
    <location>
        <begin position="108"/>
        <end position="117"/>
    </location>
</feature>
<feature type="compositionally biased region" description="Low complexity" evidence="2">
    <location>
        <begin position="123"/>
        <end position="135"/>
    </location>
</feature>
<feature type="compositionally biased region" description="Polar residues" evidence="2">
    <location>
        <begin position="147"/>
        <end position="162"/>
    </location>
</feature>
<dbReference type="EMBL" id="CP000109">
    <property type="protein sequence ID" value="ABB42563.1"/>
    <property type="molecule type" value="Genomic_DNA"/>
</dbReference>
<dbReference type="SMR" id="Q31E60"/>
<dbReference type="STRING" id="317025.Tcr_1973"/>
<dbReference type="KEGG" id="tcx:Tcr_1973"/>
<dbReference type="eggNOG" id="COG1826">
    <property type="taxonomic scope" value="Bacteria"/>
</dbReference>
<dbReference type="HOGENOM" id="CLU_086034_1_1_6"/>
<dbReference type="OrthoDB" id="9816005at2"/>
<dbReference type="GO" id="GO:0033281">
    <property type="term" value="C:TAT protein transport complex"/>
    <property type="evidence" value="ECO:0007669"/>
    <property type="project" value="UniProtKB-UniRule"/>
</dbReference>
<dbReference type="GO" id="GO:0008320">
    <property type="term" value="F:protein transmembrane transporter activity"/>
    <property type="evidence" value="ECO:0007669"/>
    <property type="project" value="UniProtKB-UniRule"/>
</dbReference>
<dbReference type="GO" id="GO:0043953">
    <property type="term" value="P:protein transport by the Tat complex"/>
    <property type="evidence" value="ECO:0007669"/>
    <property type="project" value="UniProtKB-UniRule"/>
</dbReference>
<dbReference type="Gene3D" id="1.20.5.3310">
    <property type="match status" value="1"/>
</dbReference>
<dbReference type="HAMAP" id="MF_00237">
    <property type="entry name" value="TatB"/>
    <property type="match status" value="1"/>
</dbReference>
<dbReference type="InterPro" id="IPR003369">
    <property type="entry name" value="TatA/B/E"/>
</dbReference>
<dbReference type="InterPro" id="IPR018448">
    <property type="entry name" value="TatB"/>
</dbReference>
<dbReference type="NCBIfam" id="TIGR01410">
    <property type="entry name" value="tatB"/>
    <property type="match status" value="1"/>
</dbReference>
<dbReference type="PANTHER" id="PTHR33162">
    <property type="entry name" value="SEC-INDEPENDENT PROTEIN TRANSLOCASE PROTEIN TATA, CHLOROPLASTIC"/>
    <property type="match status" value="1"/>
</dbReference>
<dbReference type="PANTHER" id="PTHR33162:SF1">
    <property type="entry name" value="SEC-INDEPENDENT PROTEIN TRANSLOCASE PROTEIN TATA, CHLOROPLASTIC"/>
    <property type="match status" value="1"/>
</dbReference>
<dbReference type="Pfam" id="PF02416">
    <property type="entry name" value="TatA_B_E"/>
    <property type="match status" value="1"/>
</dbReference>
<dbReference type="PRINTS" id="PR01506">
    <property type="entry name" value="TATBPROTEIN"/>
</dbReference>
<accession>Q31E60</accession>
<comment type="function">
    <text evidence="1">Part of the twin-arginine translocation (Tat) system that transports large folded proteins containing a characteristic twin-arginine motif in their signal peptide across membranes. Together with TatC, TatB is part of a receptor directly interacting with Tat signal peptides. TatB may form an oligomeric binding site that transiently accommodates folded Tat precursor proteins before their translocation.</text>
</comment>
<comment type="subunit">
    <text evidence="1">The Tat system comprises two distinct complexes: a TatABC complex, containing multiple copies of TatA, TatB and TatC subunits, and a separate TatA complex, containing only TatA subunits. Substrates initially bind to the TatABC complex, which probably triggers association of the separate TatA complex to form the active translocon.</text>
</comment>
<comment type="subcellular location">
    <subcellularLocation>
        <location evidence="1">Cell inner membrane</location>
        <topology evidence="1">Single-pass membrane protein</topology>
    </subcellularLocation>
</comment>
<comment type="similarity">
    <text evidence="1">Belongs to the TatB family.</text>
</comment>
<keyword id="KW-0997">Cell inner membrane</keyword>
<keyword id="KW-1003">Cell membrane</keyword>
<keyword id="KW-0472">Membrane</keyword>
<keyword id="KW-0653">Protein transport</keyword>
<keyword id="KW-0811">Translocation</keyword>
<keyword id="KW-0812">Transmembrane</keyword>
<keyword id="KW-1133">Transmembrane helix</keyword>
<keyword id="KW-0813">Transport</keyword>